<dbReference type="EMBL" id="CR860737">
    <property type="protein sequence ID" value="CAH92851.1"/>
    <property type="molecule type" value="mRNA"/>
</dbReference>
<dbReference type="RefSeq" id="NP_001126666.1">
    <property type="nucleotide sequence ID" value="NM_001133194.1"/>
</dbReference>
<dbReference type="BMRB" id="Q5R5W5"/>
<dbReference type="SMR" id="Q5R5W5"/>
<dbReference type="FunCoup" id="Q5R5W5">
    <property type="interactions" value="4435"/>
</dbReference>
<dbReference type="STRING" id="9601.ENSPPYP00000019097"/>
<dbReference type="Ensembl" id="ENSPPYT00000019850.3">
    <property type="protein sequence ID" value="ENSPPYP00000019097.2"/>
    <property type="gene ID" value="ENSPPYG00000017055.3"/>
</dbReference>
<dbReference type="GeneID" id="100173666"/>
<dbReference type="KEGG" id="pon:100173666"/>
<dbReference type="CTD" id="51534"/>
<dbReference type="eggNOG" id="KOG0917">
    <property type="taxonomic scope" value="Eukaryota"/>
</dbReference>
<dbReference type="GeneTree" id="ENSGT00390000011342"/>
<dbReference type="HOGENOM" id="CLU_030378_1_0_1"/>
<dbReference type="InParanoid" id="Q5R5W5"/>
<dbReference type="OMA" id="AYWCEYH"/>
<dbReference type="OrthoDB" id="391137at2759"/>
<dbReference type="TreeFam" id="TF105917"/>
<dbReference type="Proteomes" id="UP000001595">
    <property type="component" value="Chromosome 6"/>
</dbReference>
<dbReference type="GO" id="GO:0005829">
    <property type="term" value="C:cytosol"/>
    <property type="evidence" value="ECO:0007669"/>
    <property type="project" value="Ensembl"/>
</dbReference>
<dbReference type="GO" id="GO:0010008">
    <property type="term" value="C:endosome membrane"/>
    <property type="evidence" value="ECO:0007669"/>
    <property type="project" value="UniProtKB-SubCell"/>
</dbReference>
<dbReference type="GO" id="GO:0005771">
    <property type="term" value="C:multivesicular body"/>
    <property type="evidence" value="ECO:0007669"/>
    <property type="project" value="TreeGrafter"/>
</dbReference>
<dbReference type="GO" id="GO:0005654">
    <property type="term" value="C:nucleoplasm"/>
    <property type="evidence" value="ECO:0007669"/>
    <property type="project" value="Ensembl"/>
</dbReference>
<dbReference type="GO" id="GO:0032511">
    <property type="term" value="P:late endosome to vacuole transport via multivesicular body sorting pathway"/>
    <property type="evidence" value="ECO:0007669"/>
    <property type="project" value="InterPro"/>
</dbReference>
<dbReference type="GO" id="GO:0015031">
    <property type="term" value="P:protein transport"/>
    <property type="evidence" value="ECO:0007669"/>
    <property type="project" value="UniProtKB-KW"/>
</dbReference>
<dbReference type="FunFam" id="1.20.5.420:FF:000001">
    <property type="entry name" value="Vacuolar protein sorting-associated protein VTA1 homolog"/>
    <property type="match status" value="1"/>
</dbReference>
<dbReference type="FunFam" id="1.25.40.270:FF:000001">
    <property type="entry name" value="vacuolar protein sorting-associated protein VTA1 homolog"/>
    <property type="match status" value="1"/>
</dbReference>
<dbReference type="Gene3D" id="1.20.5.420">
    <property type="entry name" value="Immunoglobulin FC, subunit C"/>
    <property type="match status" value="1"/>
</dbReference>
<dbReference type="Gene3D" id="1.25.40.270">
    <property type="entry name" value="Vacuolar protein sorting-associated protein vta1"/>
    <property type="match status" value="1"/>
</dbReference>
<dbReference type="InterPro" id="IPR044538">
    <property type="entry name" value="Vta1-like"/>
</dbReference>
<dbReference type="InterPro" id="IPR039431">
    <property type="entry name" value="Vta1/CALS_N"/>
</dbReference>
<dbReference type="InterPro" id="IPR023175">
    <property type="entry name" value="Vta1/CALS_N_sf"/>
</dbReference>
<dbReference type="InterPro" id="IPR041212">
    <property type="entry name" value="Vta1_C"/>
</dbReference>
<dbReference type="PANTHER" id="PTHR46009">
    <property type="entry name" value="VACUOLAR PROTEIN SORTING-ASSOCIATED PROTEIN VTA1 HOMOLOG"/>
    <property type="match status" value="1"/>
</dbReference>
<dbReference type="PANTHER" id="PTHR46009:SF1">
    <property type="entry name" value="VACUOLAR PROTEIN SORTING-ASSOCIATED PROTEIN VTA1 HOMOLOG"/>
    <property type="match status" value="1"/>
</dbReference>
<dbReference type="Pfam" id="PF04652">
    <property type="entry name" value="Vta1"/>
    <property type="match status" value="1"/>
</dbReference>
<dbReference type="Pfam" id="PF18097">
    <property type="entry name" value="Vta1_C"/>
    <property type="match status" value="1"/>
</dbReference>
<gene>
    <name type="primary">VTA1</name>
</gene>
<sequence>MAALAPLPPLPAQFKSIQHHLRTAQEHDKRDPVVAYYCRLYAMQTGMKIDSKTPECRKFLSKLMDQLEALKKQLGDNEAITQEIVGCAHLENYALKMFLYADNEDRAGRFHKNMIKSFYTASLLIDVITVFGELTDENVKHRKYARWKATYIHNCLKNGETPQAGPVGIEEDNDVEENEDAGAASLPTQPTQPSSSSTYDPSNMPSGNYTGIQIPPGAHAPANTPAEVPHSTGVASNTIQPTPQTIPAIDPALFNTISQGDIRLTPEDFARAQKYCKYAGSALQYEDVSTAVQNLQKALKLLTTGRE</sequence>
<reference key="1">
    <citation type="submission" date="2004-11" db="EMBL/GenBank/DDBJ databases">
        <authorList>
            <consortium name="The German cDNA consortium"/>
        </authorList>
    </citation>
    <scope>NUCLEOTIDE SEQUENCE [LARGE SCALE MRNA]</scope>
    <source>
        <tissue>Brain cortex</tissue>
    </source>
</reference>
<comment type="function">
    <text evidence="1">Involved in the endosomal multivesicular bodies (MVB) pathway. MVBs contain intraluminal vesicles (ILVs) that are generated by invagination and scission from the limiting membrane of the endosome and mostly are delivered to lysosomes enabling degradation of membrane proteins, such as stimulated growth factor receptors, lysosomal enzymes and lipids. Thought to be a cofactor of VPS4A/B, which catalyzes disassembles membrane-associated ESCRT-III assemblies. Involved in the sorting and down-regulation of EGFR (By similarity).</text>
</comment>
<comment type="subunit">
    <text evidence="1">Interacts with VPS4B. Interacts with CHMP1B. Interacts with CHMP2A; the interaction probably involves the open conformation of (polymerized) CHMP2A. Interacts with CHMP3. Interacts with CHMP5; the interaction involves soluble CHMP5. Interacts with IST1 (By similarity).</text>
</comment>
<comment type="subcellular location">
    <subcellularLocation>
        <location evidence="1">Cytoplasm</location>
    </subcellularLocation>
    <subcellularLocation>
        <location evidence="1">Endosome membrane</location>
        <topology evidence="1">Peripheral membrane protein</topology>
    </subcellularLocation>
</comment>
<comment type="similarity">
    <text evidence="4">Belongs to the VTA1 family.</text>
</comment>
<keyword id="KW-0007">Acetylation</keyword>
<keyword id="KW-0963">Cytoplasm</keyword>
<keyword id="KW-0967">Endosome</keyword>
<keyword id="KW-0472">Membrane</keyword>
<keyword id="KW-0653">Protein transport</keyword>
<keyword id="KW-1185">Reference proteome</keyword>
<keyword id="KW-0813">Transport</keyword>
<evidence type="ECO:0000250" key="1"/>
<evidence type="ECO:0000250" key="2">
    <source>
        <dbReference type="UniProtKB" id="Q9NP79"/>
    </source>
</evidence>
<evidence type="ECO:0000256" key="3">
    <source>
        <dbReference type="SAM" id="MobiDB-lite"/>
    </source>
</evidence>
<evidence type="ECO:0000305" key="4"/>
<protein>
    <recommendedName>
        <fullName>Vacuolar protein sorting-associated protein VTA1 homolog</fullName>
    </recommendedName>
</protein>
<accession>Q5R5W5</accession>
<organism>
    <name type="scientific">Pongo abelii</name>
    <name type="common">Sumatran orangutan</name>
    <name type="synonym">Pongo pygmaeus abelii</name>
    <dbReference type="NCBI Taxonomy" id="9601"/>
    <lineage>
        <taxon>Eukaryota</taxon>
        <taxon>Metazoa</taxon>
        <taxon>Chordata</taxon>
        <taxon>Craniata</taxon>
        <taxon>Vertebrata</taxon>
        <taxon>Euteleostomi</taxon>
        <taxon>Mammalia</taxon>
        <taxon>Eutheria</taxon>
        <taxon>Euarchontoglires</taxon>
        <taxon>Primates</taxon>
        <taxon>Haplorrhini</taxon>
        <taxon>Catarrhini</taxon>
        <taxon>Hominidae</taxon>
        <taxon>Pongo</taxon>
    </lineage>
</organism>
<feature type="initiator methionine" description="Removed" evidence="2">
    <location>
        <position position="1"/>
    </location>
</feature>
<feature type="chain" id="PRO_0000289143" description="Vacuolar protein sorting-associated protein VTA1 homolog">
    <location>
        <begin position="2"/>
        <end position="307"/>
    </location>
</feature>
<feature type="region of interest" description="Interaction with IST1" evidence="1">
    <location>
        <begin position="2"/>
        <end position="186"/>
    </location>
</feature>
<feature type="region of interest" description="Interaction with CHMP5" evidence="1">
    <location>
        <begin position="2"/>
        <end position="75"/>
    </location>
</feature>
<feature type="region of interest" description="Disordered" evidence="3">
    <location>
        <begin position="160"/>
        <end position="233"/>
    </location>
</feature>
<feature type="region of interest" description="Interaction with VPS4B" evidence="1">
    <location>
        <begin position="198"/>
        <end position="307"/>
    </location>
</feature>
<feature type="compositionally biased region" description="Acidic residues" evidence="3">
    <location>
        <begin position="169"/>
        <end position="180"/>
    </location>
</feature>
<feature type="compositionally biased region" description="Low complexity" evidence="3">
    <location>
        <begin position="185"/>
        <end position="206"/>
    </location>
</feature>
<feature type="modified residue" description="N-acetylalanine" evidence="2">
    <location>
        <position position="2"/>
    </location>
</feature>
<name>VTA1_PONAB</name>
<proteinExistence type="evidence at transcript level"/>